<comment type="function">
    <text evidence="1">Cell wall formation. Adds enolpyruvyl to UDP-N-acetylglucosamine.</text>
</comment>
<comment type="catalytic activity">
    <reaction evidence="1">
        <text>phosphoenolpyruvate + UDP-N-acetyl-alpha-D-glucosamine = UDP-N-acetyl-3-O-(1-carboxyvinyl)-alpha-D-glucosamine + phosphate</text>
        <dbReference type="Rhea" id="RHEA:18681"/>
        <dbReference type="ChEBI" id="CHEBI:43474"/>
        <dbReference type="ChEBI" id="CHEBI:57705"/>
        <dbReference type="ChEBI" id="CHEBI:58702"/>
        <dbReference type="ChEBI" id="CHEBI:68483"/>
        <dbReference type="EC" id="2.5.1.7"/>
    </reaction>
</comment>
<comment type="pathway">
    <text evidence="1">Cell wall biogenesis; peptidoglycan biosynthesis.</text>
</comment>
<comment type="subcellular location">
    <subcellularLocation>
        <location evidence="1">Cytoplasm</location>
    </subcellularLocation>
</comment>
<comment type="similarity">
    <text evidence="1">Belongs to the EPSP synthase family. MurA subfamily.</text>
</comment>
<accession>A0RPC8</accession>
<sequence length="419" mass="44689">MDYLEIKGGKKLFGSVYISGAKNAALPLIAMSILAKNDVVIRNIPQVADIKTLIKLLQNLGAVSKFENLDLVINTTTINSTKATYDIVRKMRASILVLGPLLARFGHCEVSLPGGCAIGARPIDLHLSALEKMGANIEIKDGYVIARAKDGLKGANIIFDKITVTGTENIVMAAALARGTTKILNAAKEPEVVQVCQILNDSGIKIEGIGTNELTIYGGGGELLNLNKICVIPDRIEAGTYLCAAAIAGGEITLKQVEPNHLVSVLGKLSDMGVNFELGDKSIKVISDAKLSPVQIITTEFPGFPTDMQAQFMALACVANGVSTIDERLFENRFMHASELNRMGADIKLNGHIATVSGVSLNGADVMATDLRASSALVLAALVANGTTRVHRIYHLDRGYENLEIKLQSLGADIKRLSE</sequence>
<keyword id="KW-0131">Cell cycle</keyword>
<keyword id="KW-0132">Cell division</keyword>
<keyword id="KW-0133">Cell shape</keyword>
<keyword id="KW-0961">Cell wall biogenesis/degradation</keyword>
<keyword id="KW-0963">Cytoplasm</keyword>
<keyword id="KW-0573">Peptidoglycan synthesis</keyword>
<keyword id="KW-0670">Pyruvate</keyword>
<keyword id="KW-0808">Transferase</keyword>
<feature type="chain" id="PRO_1000023024" description="UDP-N-acetylglucosamine 1-carboxyvinyltransferase">
    <location>
        <begin position="1"/>
        <end position="419"/>
    </location>
</feature>
<feature type="active site" description="Proton donor" evidence="1">
    <location>
        <position position="116"/>
    </location>
</feature>
<feature type="binding site" evidence="1">
    <location>
        <begin position="22"/>
        <end position="23"/>
    </location>
    <ligand>
        <name>phosphoenolpyruvate</name>
        <dbReference type="ChEBI" id="CHEBI:58702"/>
    </ligand>
</feature>
<feature type="binding site" evidence="1">
    <location>
        <position position="92"/>
    </location>
    <ligand>
        <name>UDP-N-acetyl-alpha-D-glucosamine</name>
        <dbReference type="ChEBI" id="CHEBI:57705"/>
    </ligand>
</feature>
<feature type="binding site" evidence="1">
    <location>
        <begin position="121"/>
        <end position="125"/>
    </location>
    <ligand>
        <name>UDP-N-acetyl-alpha-D-glucosamine</name>
        <dbReference type="ChEBI" id="CHEBI:57705"/>
    </ligand>
</feature>
<feature type="binding site" evidence="1">
    <location>
        <position position="307"/>
    </location>
    <ligand>
        <name>UDP-N-acetyl-alpha-D-glucosamine</name>
        <dbReference type="ChEBI" id="CHEBI:57705"/>
    </ligand>
</feature>
<feature type="binding site" evidence="1">
    <location>
        <position position="329"/>
    </location>
    <ligand>
        <name>UDP-N-acetyl-alpha-D-glucosamine</name>
        <dbReference type="ChEBI" id="CHEBI:57705"/>
    </ligand>
</feature>
<feature type="modified residue" description="2-(S-cysteinyl)pyruvic acid O-phosphothioketal" evidence="1">
    <location>
        <position position="116"/>
    </location>
</feature>
<organism>
    <name type="scientific">Campylobacter fetus subsp. fetus (strain 82-40)</name>
    <dbReference type="NCBI Taxonomy" id="360106"/>
    <lineage>
        <taxon>Bacteria</taxon>
        <taxon>Pseudomonadati</taxon>
        <taxon>Campylobacterota</taxon>
        <taxon>Epsilonproteobacteria</taxon>
        <taxon>Campylobacterales</taxon>
        <taxon>Campylobacteraceae</taxon>
        <taxon>Campylobacter</taxon>
    </lineage>
</organism>
<proteinExistence type="inferred from homology"/>
<dbReference type="EC" id="2.5.1.7" evidence="1"/>
<dbReference type="EMBL" id="CP000487">
    <property type="protein sequence ID" value="ABK81781.1"/>
    <property type="molecule type" value="Genomic_DNA"/>
</dbReference>
<dbReference type="RefSeq" id="WP_002849397.1">
    <property type="nucleotide sequence ID" value="NC_008599.1"/>
</dbReference>
<dbReference type="SMR" id="A0RPC8"/>
<dbReference type="GeneID" id="61064722"/>
<dbReference type="KEGG" id="cff:CFF8240_0888"/>
<dbReference type="eggNOG" id="COG0766">
    <property type="taxonomic scope" value="Bacteria"/>
</dbReference>
<dbReference type="HOGENOM" id="CLU_027387_0_0_7"/>
<dbReference type="UniPathway" id="UPA00219"/>
<dbReference type="Proteomes" id="UP000000760">
    <property type="component" value="Chromosome"/>
</dbReference>
<dbReference type="GO" id="GO:0005737">
    <property type="term" value="C:cytoplasm"/>
    <property type="evidence" value="ECO:0007669"/>
    <property type="project" value="UniProtKB-SubCell"/>
</dbReference>
<dbReference type="GO" id="GO:0008760">
    <property type="term" value="F:UDP-N-acetylglucosamine 1-carboxyvinyltransferase activity"/>
    <property type="evidence" value="ECO:0007669"/>
    <property type="project" value="UniProtKB-UniRule"/>
</dbReference>
<dbReference type="GO" id="GO:0051301">
    <property type="term" value="P:cell division"/>
    <property type="evidence" value="ECO:0007669"/>
    <property type="project" value="UniProtKB-KW"/>
</dbReference>
<dbReference type="GO" id="GO:0071555">
    <property type="term" value="P:cell wall organization"/>
    <property type="evidence" value="ECO:0007669"/>
    <property type="project" value="UniProtKB-KW"/>
</dbReference>
<dbReference type="GO" id="GO:0009252">
    <property type="term" value="P:peptidoglycan biosynthetic process"/>
    <property type="evidence" value="ECO:0007669"/>
    <property type="project" value="UniProtKB-UniRule"/>
</dbReference>
<dbReference type="GO" id="GO:0008360">
    <property type="term" value="P:regulation of cell shape"/>
    <property type="evidence" value="ECO:0007669"/>
    <property type="project" value="UniProtKB-KW"/>
</dbReference>
<dbReference type="GO" id="GO:0019277">
    <property type="term" value="P:UDP-N-acetylgalactosamine biosynthetic process"/>
    <property type="evidence" value="ECO:0007669"/>
    <property type="project" value="InterPro"/>
</dbReference>
<dbReference type="CDD" id="cd01555">
    <property type="entry name" value="UdpNAET"/>
    <property type="match status" value="1"/>
</dbReference>
<dbReference type="FunFam" id="3.65.10.10:FF:000001">
    <property type="entry name" value="UDP-N-acetylglucosamine 1-carboxyvinyltransferase"/>
    <property type="match status" value="1"/>
</dbReference>
<dbReference type="Gene3D" id="3.65.10.10">
    <property type="entry name" value="Enolpyruvate transferase domain"/>
    <property type="match status" value="2"/>
</dbReference>
<dbReference type="HAMAP" id="MF_00111">
    <property type="entry name" value="MurA"/>
    <property type="match status" value="1"/>
</dbReference>
<dbReference type="InterPro" id="IPR001986">
    <property type="entry name" value="Enolpyruvate_Tfrase_dom"/>
</dbReference>
<dbReference type="InterPro" id="IPR036968">
    <property type="entry name" value="Enolpyruvate_Tfrase_sf"/>
</dbReference>
<dbReference type="InterPro" id="IPR050068">
    <property type="entry name" value="MurA_subfamily"/>
</dbReference>
<dbReference type="InterPro" id="IPR013792">
    <property type="entry name" value="RNA3'P_cycl/enolpyr_Trfase_a/b"/>
</dbReference>
<dbReference type="InterPro" id="IPR005750">
    <property type="entry name" value="UDP_GlcNAc_COvinyl_MurA"/>
</dbReference>
<dbReference type="NCBIfam" id="TIGR01072">
    <property type="entry name" value="murA"/>
    <property type="match status" value="1"/>
</dbReference>
<dbReference type="NCBIfam" id="NF006873">
    <property type="entry name" value="PRK09369.1"/>
    <property type="match status" value="1"/>
</dbReference>
<dbReference type="PANTHER" id="PTHR43783">
    <property type="entry name" value="UDP-N-ACETYLGLUCOSAMINE 1-CARBOXYVINYLTRANSFERASE"/>
    <property type="match status" value="1"/>
</dbReference>
<dbReference type="PANTHER" id="PTHR43783:SF1">
    <property type="entry name" value="UDP-N-ACETYLGLUCOSAMINE 1-CARBOXYVINYLTRANSFERASE"/>
    <property type="match status" value="1"/>
</dbReference>
<dbReference type="Pfam" id="PF00275">
    <property type="entry name" value="EPSP_synthase"/>
    <property type="match status" value="1"/>
</dbReference>
<dbReference type="SUPFAM" id="SSF55205">
    <property type="entry name" value="EPT/RTPC-like"/>
    <property type="match status" value="1"/>
</dbReference>
<name>MURA_CAMFF</name>
<reference key="1">
    <citation type="submission" date="2006-11" db="EMBL/GenBank/DDBJ databases">
        <title>Sequence of Campylobacter fetus subsp. fetus 82-40.</title>
        <authorList>
            <person name="Fouts D.E."/>
            <person name="Nelson K.E."/>
        </authorList>
    </citation>
    <scope>NUCLEOTIDE SEQUENCE [LARGE SCALE GENOMIC DNA]</scope>
    <source>
        <strain>82-40</strain>
    </source>
</reference>
<protein>
    <recommendedName>
        <fullName evidence="1">UDP-N-acetylglucosamine 1-carboxyvinyltransferase</fullName>
        <ecNumber evidence="1">2.5.1.7</ecNumber>
    </recommendedName>
    <alternativeName>
        <fullName evidence="1">Enoylpyruvate transferase</fullName>
    </alternativeName>
    <alternativeName>
        <fullName evidence="1">UDP-N-acetylglucosamine enolpyruvyl transferase</fullName>
        <shortName evidence="1">EPT</shortName>
    </alternativeName>
</protein>
<gene>
    <name evidence="1" type="primary">murA</name>
    <name type="ordered locus">CFF8240_0888</name>
</gene>
<evidence type="ECO:0000255" key="1">
    <source>
        <dbReference type="HAMAP-Rule" id="MF_00111"/>
    </source>
</evidence>